<dbReference type="EMBL" id="CP000923">
    <property type="protein sequence ID" value="ABY91820.1"/>
    <property type="molecule type" value="Genomic_DNA"/>
</dbReference>
<dbReference type="RefSeq" id="WP_003866817.1">
    <property type="nucleotide sequence ID" value="NC_010320.1"/>
</dbReference>
<dbReference type="SMR" id="B0K3P5"/>
<dbReference type="KEGG" id="tex:Teth514_0512"/>
<dbReference type="HOGENOM" id="CLU_132825_2_0_9"/>
<dbReference type="Proteomes" id="UP000002155">
    <property type="component" value="Chromosome"/>
</dbReference>
<dbReference type="GO" id="GO:0005737">
    <property type="term" value="C:cytoplasm"/>
    <property type="evidence" value="ECO:0007669"/>
    <property type="project" value="UniProtKB-SubCell"/>
</dbReference>
<dbReference type="GO" id="GO:0005524">
    <property type="term" value="F:ATP binding"/>
    <property type="evidence" value="ECO:0007669"/>
    <property type="project" value="InterPro"/>
</dbReference>
<dbReference type="GO" id="GO:0046872">
    <property type="term" value="F:metal ion binding"/>
    <property type="evidence" value="ECO:0007669"/>
    <property type="project" value="TreeGrafter"/>
</dbReference>
<dbReference type="GO" id="GO:0044183">
    <property type="term" value="F:protein folding chaperone"/>
    <property type="evidence" value="ECO:0007669"/>
    <property type="project" value="InterPro"/>
</dbReference>
<dbReference type="GO" id="GO:0051087">
    <property type="term" value="F:protein-folding chaperone binding"/>
    <property type="evidence" value="ECO:0007669"/>
    <property type="project" value="TreeGrafter"/>
</dbReference>
<dbReference type="GO" id="GO:0051082">
    <property type="term" value="F:unfolded protein binding"/>
    <property type="evidence" value="ECO:0007669"/>
    <property type="project" value="TreeGrafter"/>
</dbReference>
<dbReference type="GO" id="GO:0051085">
    <property type="term" value="P:chaperone cofactor-dependent protein refolding"/>
    <property type="evidence" value="ECO:0007669"/>
    <property type="project" value="TreeGrafter"/>
</dbReference>
<dbReference type="CDD" id="cd00320">
    <property type="entry name" value="cpn10"/>
    <property type="match status" value="1"/>
</dbReference>
<dbReference type="FunFam" id="2.30.33.40:FF:000001">
    <property type="entry name" value="10 kDa chaperonin"/>
    <property type="match status" value="1"/>
</dbReference>
<dbReference type="Gene3D" id="2.30.33.40">
    <property type="entry name" value="GroES chaperonin"/>
    <property type="match status" value="1"/>
</dbReference>
<dbReference type="HAMAP" id="MF_00580">
    <property type="entry name" value="CH10"/>
    <property type="match status" value="1"/>
</dbReference>
<dbReference type="InterPro" id="IPR020818">
    <property type="entry name" value="Chaperonin_GroES"/>
</dbReference>
<dbReference type="InterPro" id="IPR037124">
    <property type="entry name" value="Chaperonin_GroES_sf"/>
</dbReference>
<dbReference type="InterPro" id="IPR018369">
    <property type="entry name" value="Chaprnonin_Cpn10_CS"/>
</dbReference>
<dbReference type="InterPro" id="IPR011032">
    <property type="entry name" value="GroES-like_sf"/>
</dbReference>
<dbReference type="NCBIfam" id="NF001527">
    <property type="entry name" value="PRK00364.1-2"/>
    <property type="match status" value="1"/>
</dbReference>
<dbReference type="NCBIfam" id="NF001531">
    <property type="entry name" value="PRK00364.2-2"/>
    <property type="match status" value="1"/>
</dbReference>
<dbReference type="NCBIfam" id="NF001533">
    <property type="entry name" value="PRK00364.2-4"/>
    <property type="match status" value="1"/>
</dbReference>
<dbReference type="NCBIfam" id="NF001534">
    <property type="entry name" value="PRK00364.2-5"/>
    <property type="match status" value="1"/>
</dbReference>
<dbReference type="PANTHER" id="PTHR10772">
    <property type="entry name" value="10 KDA HEAT SHOCK PROTEIN"/>
    <property type="match status" value="1"/>
</dbReference>
<dbReference type="PANTHER" id="PTHR10772:SF58">
    <property type="entry name" value="CO-CHAPERONIN GROES"/>
    <property type="match status" value="1"/>
</dbReference>
<dbReference type="Pfam" id="PF00166">
    <property type="entry name" value="Cpn10"/>
    <property type="match status" value="1"/>
</dbReference>
<dbReference type="PRINTS" id="PR00297">
    <property type="entry name" value="CHAPERONIN10"/>
</dbReference>
<dbReference type="SMART" id="SM00883">
    <property type="entry name" value="Cpn10"/>
    <property type="match status" value="1"/>
</dbReference>
<dbReference type="SUPFAM" id="SSF50129">
    <property type="entry name" value="GroES-like"/>
    <property type="match status" value="1"/>
</dbReference>
<dbReference type="PROSITE" id="PS00681">
    <property type="entry name" value="CHAPERONINS_CPN10"/>
    <property type="match status" value="1"/>
</dbReference>
<sequence>MRLKPLGDRVVVKVIQAEEVTKGGVILPGTAKEKPQQGEVVAVGTGQYIDGKKVELEVKVGDRVIFSKYAGTEVKLDGEEYLLLRESDILAIIE</sequence>
<proteinExistence type="inferred from homology"/>
<feature type="chain" id="PRO_1000129719" description="Co-chaperonin GroES">
    <location>
        <begin position="1"/>
        <end position="94"/>
    </location>
</feature>
<gene>
    <name evidence="1" type="primary">groES</name>
    <name evidence="1" type="synonym">groS</name>
    <name type="ordered locus">Teth514_0512</name>
</gene>
<name>CH10_THEPX</name>
<evidence type="ECO:0000255" key="1">
    <source>
        <dbReference type="HAMAP-Rule" id="MF_00580"/>
    </source>
</evidence>
<keyword id="KW-0143">Chaperone</keyword>
<keyword id="KW-0963">Cytoplasm</keyword>
<protein>
    <recommendedName>
        <fullName evidence="1">Co-chaperonin GroES</fullName>
    </recommendedName>
    <alternativeName>
        <fullName evidence="1">10 kDa chaperonin</fullName>
    </alternativeName>
    <alternativeName>
        <fullName evidence="1">Chaperonin-10</fullName>
        <shortName evidence="1">Cpn10</shortName>
    </alternativeName>
</protein>
<comment type="function">
    <text evidence="1">Together with the chaperonin GroEL, plays an essential role in assisting protein folding. The GroEL-GroES system forms a nano-cage that allows encapsulation of the non-native substrate proteins and provides a physical environment optimized to promote and accelerate protein folding. GroES binds to the apical surface of the GroEL ring, thereby capping the opening of the GroEL channel.</text>
</comment>
<comment type="subunit">
    <text evidence="1">Heptamer of 7 subunits arranged in a ring. Interacts with the chaperonin GroEL.</text>
</comment>
<comment type="subcellular location">
    <subcellularLocation>
        <location evidence="1">Cytoplasm</location>
    </subcellularLocation>
</comment>
<comment type="similarity">
    <text evidence="1">Belongs to the GroES chaperonin family.</text>
</comment>
<accession>B0K3P5</accession>
<organism>
    <name type="scientific">Thermoanaerobacter sp. (strain X514)</name>
    <dbReference type="NCBI Taxonomy" id="399726"/>
    <lineage>
        <taxon>Bacteria</taxon>
        <taxon>Bacillati</taxon>
        <taxon>Bacillota</taxon>
        <taxon>Clostridia</taxon>
        <taxon>Thermoanaerobacterales</taxon>
        <taxon>Thermoanaerobacteraceae</taxon>
        <taxon>Thermoanaerobacter</taxon>
    </lineage>
</organism>
<reference key="1">
    <citation type="submission" date="2008-01" db="EMBL/GenBank/DDBJ databases">
        <title>Complete sequence of Thermoanaerobacter sp. X514.</title>
        <authorList>
            <consortium name="US DOE Joint Genome Institute"/>
            <person name="Copeland A."/>
            <person name="Lucas S."/>
            <person name="Lapidus A."/>
            <person name="Barry K."/>
            <person name="Glavina del Rio T."/>
            <person name="Dalin E."/>
            <person name="Tice H."/>
            <person name="Pitluck S."/>
            <person name="Bruce D."/>
            <person name="Goodwin L."/>
            <person name="Saunders E."/>
            <person name="Brettin T."/>
            <person name="Detter J.C."/>
            <person name="Han C."/>
            <person name="Schmutz J."/>
            <person name="Larimer F."/>
            <person name="Land M."/>
            <person name="Hauser L."/>
            <person name="Kyrpides N."/>
            <person name="Kim E."/>
            <person name="Hemme C."/>
            <person name="Fields M.W."/>
            <person name="He Z."/>
            <person name="Zhou J."/>
            <person name="Richardson P."/>
        </authorList>
    </citation>
    <scope>NUCLEOTIDE SEQUENCE [LARGE SCALE GENOMIC DNA]</scope>
    <source>
        <strain>X514</strain>
    </source>
</reference>